<name>THOP1_RAT</name>
<sequence length="687" mass="78385">MKPPAACAGDVVDTVSPCSTVNHLRWDLSAQQIRALTTQLIEQTKCVYDRVGAQDFEDVSYESTLKALADVEVTYTVQRNILDFPQHVSPNKDIRAASTEADKKLSEFDVEMSMRQDVYQRVVWLQEKIPKDSLKPEAARYLERLIKLGRRNGLHLPQDTQEKIKNIKKRLSLLCIDFNKNLNEDTTFLPFTREELGGLPEDFLNSLEKTEDGKLKVTLKYPHYFPLLKKCHVPETRRLLEEAFNCRCKEENCAILKELVSLRAQKSNLLGFRTHADYVLEMNMAKTSQTVATFLDELARKLKPLGEQERAVILELKEAECAKRGLPFDGRIHAWDMRYYMNQVEETRYRVDQNLLKEYFPMQVVTRGLLAIYQELLGLTFTLEEGAAAWHEDVRLYSVRDAASGEEIGKFYLDLYPREGKYGHAACFGLQPGCLRQDGSRQLAIAAMVANFTKPTPDVPSLLQHDEVETYFHEFGHVMHQLCSQAEFAMFSGTHVERDFVEAPSQMLENWVWEKEPLMRMSQHYRTGGEAPEDLLEKLIKSRQANAGLFNLRQIVLAKVDQVLHTQTDVDPAEEYARLCQEILGVPATPGTNMPATFGHLAGGYDAQYYGYLWSEVYSMDMFHTRFKQEGVLSPKVGMDYRTSILRPGGSEDASTMLKQFLGRDPKQDAFLLSKGLQVEGCEPPAC</sequence>
<evidence type="ECO:0000250" key="1">
    <source>
        <dbReference type="UniProtKB" id="P47788"/>
    </source>
</evidence>
<evidence type="ECO:0000250" key="2">
    <source>
        <dbReference type="UniProtKB" id="P52888"/>
    </source>
</evidence>
<evidence type="ECO:0000250" key="3">
    <source>
        <dbReference type="UniProtKB" id="Q8C1A5"/>
    </source>
</evidence>
<evidence type="ECO:0000255" key="4">
    <source>
        <dbReference type="PROSITE-ProRule" id="PRU10095"/>
    </source>
</evidence>
<evidence type="ECO:0000269" key="5">
    <source>
    </source>
</evidence>
<evidence type="ECO:0000269" key="6">
    <source>
    </source>
</evidence>
<evidence type="ECO:0000269" key="7">
    <source>
    </source>
</evidence>
<evidence type="ECO:0000305" key="8"/>
<accession>P24155</accession>
<accession>Q66HS4</accession>
<dbReference type="EC" id="3.4.24.15" evidence="5"/>
<dbReference type="EMBL" id="M61142">
    <property type="protein sequence ID" value="AAA41586.1"/>
    <property type="molecule type" value="mRNA"/>
</dbReference>
<dbReference type="EMBL" id="BC081706">
    <property type="protein sequence ID" value="AAH81706.1"/>
    <property type="molecule type" value="mRNA"/>
</dbReference>
<dbReference type="PIR" id="S38760">
    <property type="entry name" value="HYRTTH"/>
</dbReference>
<dbReference type="RefSeq" id="NP_742072.2">
    <property type="nucleotide sequence ID" value="NM_172075.2"/>
</dbReference>
<dbReference type="SMR" id="P24155"/>
<dbReference type="BioGRID" id="249102">
    <property type="interactions" value="1"/>
</dbReference>
<dbReference type="ELM" id="P24155"/>
<dbReference type="FunCoup" id="P24155">
    <property type="interactions" value="2391"/>
</dbReference>
<dbReference type="IntAct" id="P24155">
    <property type="interactions" value="5"/>
</dbReference>
<dbReference type="STRING" id="10116.ENSRNOP00000027045"/>
<dbReference type="MEROPS" id="M03.001"/>
<dbReference type="GlyGen" id="P24155">
    <property type="glycosylation" value="2 sites, 1 O-linked glycan (1 site)"/>
</dbReference>
<dbReference type="iPTMnet" id="P24155"/>
<dbReference type="PhosphoSitePlus" id="P24155"/>
<dbReference type="jPOST" id="P24155"/>
<dbReference type="PaxDb" id="10116-ENSRNOP00000027045"/>
<dbReference type="Ensembl" id="ENSRNOT00000027045.7">
    <property type="protein sequence ID" value="ENSRNOP00000027045.5"/>
    <property type="gene ID" value="ENSRNOG00000019924.7"/>
</dbReference>
<dbReference type="GeneID" id="64517"/>
<dbReference type="KEGG" id="rno:64517"/>
<dbReference type="UCSC" id="RGD:68330">
    <property type="organism name" value="rat"/>
</dbReference>
<dbReference type="AGR" id="RGD:68330"/>
<dbReference type="CTD" id="7064"/>
<dbReference type="RGD" id="68330">
    <property type="gene designation" value="Thop1"/>
</dbReference>
<dbReference type="eggNOG" id="KOG2089">
    <property type="taxonomic scope" value="Eukaryota"/>
</dbReference>
<dbReference type="GeneTree" id="ENSGT00950000183171"/>
<dbReference type="HOGENOM" id="CLU_001805_2_1_1"/>
<dbReference type="InParanoid" id="P24155"/>
<dbReference type="OMA" id="KNFQSAM"/>
<dbReference type="OrthoDB" id="534666at2759"/>
<dbReference type="PhylomeDB" id="P24155"/>
<dbReference type="TreeFam" id="TF300459"/>
<dbReference type="BRENDA" id="3.4.24.15">
    <property type="organism ID" value="5301"/>
</dbReference>
<dbReference type="Reactome" id="R-RNO-983168">
    <property type="pathway name" value="Antigen processing: Ubiquitination &amp; Proteasome degradation"/>
</dbReference>
<dbReference type="PRO" id="PR:P24155"/>
<dbReference type="Proteomes" id="UP000002494">
    <property type="component" value="Chromosome 7"/>
</dbReference>
<dbReference type="Bgee" id="ENSRNOG00000019924">
    <property type="expression patterns" value="Expressed in testis and 20 other cell types or tissues"/>
</dbReference>
<dbReference type="ExpressionAtlas" id="P24155">
    <property type="expression patterns" value="baseline and differential"/>
</dbReference>
<dbReference type="GO" id="GO:0005758">
    <property type="term" value="C:mitochondrial intermembrane space"/>
    <property type="evidence" value="ECO:0000318"/>
    <property type="project" value="GO_Central"/>
</dbReference>
<dbReference type="GO" id="GO:0046872">
    <property type="term" value="F:metal ion binding"/>
    <property type="evidence" value="ECO:0007669"/>
    <property type="project" value="UniProtKB-KW"/>
</dbReference>
<dbReference type="GO" id="GO:0004222">
    <property type="term" value="F:metalloendopeptidase activity"/>
    <property type="evidence" value="ECO:0000266"/>
    <property type="project" value="RGD"/>
</dbReference>
<dbReference type="GO" id="GO:0008233">
    <property type="term" value="F:peptidase activity"/>
    <property type="evidence" value="ECO:0000314"/>
    <property type="project" value="UniProtKB"/>
</dbReference>
<dbReference type="GO" id="GO:0042277">
    <property type="term" value="F:peptide binding"/>
    <property type="evidence" value="ECO:0000314"/>
    <property type="project" value="RGD"/>
</dbReference>
<dbReference type="GO" id="GO:0035556">
    <property type="term" value="P:intracellular signal transduction"/>
    <property type="evidence" value="ECO:0000266"/>
    <property type="project" value="RGD"/>
</dbReference>
<dbReference type="GO" id="GO:0043171">
    <property type="term" value="P:peptide catabolic process"/>
    <property type="evidence" value="ECO:0000314"/>
    <property type="project" value="UniProtKB"/>
</dbReference>
<dbReference type="GO" id="GO:0006518">
    <property type="term" value="P:peptide metabolic process"/>
    <property type="evidence" value="ECO:0000266"/>
    <property type="project" value="RGD"/>
</dbReference>
<dbReference type="GO" id="GO:0006508">
    <property type="term" value="P:proteolysis"/>
    <property type="evidence" value="ECO:0000318"/>
    <property type="project" value="GO_Central"/>
</dbReference>
<dbReference type="CDD" id="cd06455">
    <property type="entry name" value="M3A_TOP"/>
    <property type="match status" value="1"/>
</dbReference>
<dbReference type="FunFam" id="1.10.1370.10:FF:000027">
    <property type="entry name" value="Thimet oligopeptidase 1"/>
    <property type="match status" value="1"/>
</dbReference>
<dbReference type="FunFam" id="1.20.1050.40:FF:000001">
    <property type="entry name" value="Thimet oligopeptidase 1"/>
    <property type="match status" value="1"/>
</dbReference>
<dbReference type="FunFam" id="3.40.390.10:FF:000006">
    <property type="entry name" value="Thimet oligopeptidase 1"/>
    <property type="match status" value="1"/>
</dbReference>
<dbReference type="Gene3D" id="3.40.390.10">
    <property type="entry name" value="Collagenase (Catalytic Domain)"/>
    <property type="match status" value="1"/>
</dbReference>
<dbReference type="Gene3D" id="1.20.1050.40">
    <property type="entry name" value="Endopeptidase. Chain P, domain 1"/>
    <property type="match status" value="1"/>
</dbReference>
<dbReference type="Gene3D" id="1.10.1370.10">
    <property type="entry name" value="Neurolysin, domain 3"/>
    <property type="match status" value="1"/>
</dbReference>
<dbReference type="InterPro" id="IPR024079">
    <property type="entry name" value="MetalloPept_cat_dom_sf"/>
</dbReference>
<dbReference type="InterPro" id="IPR024077">
    <property type="entry name" value="Neurolysin/TOP_dom2"/>
</dbReference>
<dbReference type="InterPro" id="IPR024080">
    <property type="entry name" value="Neurolysin/TOP_N"/>
</dbReference>
<dbReference type="InterPro" id="IPR045090">
    <property type="entry name" value="Pept_M3A_M3B"/>
</dbReference>
<dbReference type="InterPro" id="IPR001567">
    <property type="entry name" value="Pept_M3A_M3B_dom"/>
</dbReference>
<dbReference type="PANTHER" id="PTHR11804">
    <property type="entry name" value="PROTEASE M3 THIMET OLIGOPEPTIDASE-RELATED"/>
    <property type="match status" value="1"/>
</dbReference>
<dbReference type="PANTHER" id="PTHR11804:SF50">
    <property type="entry name" value="THIMET OLIGOPEPTIDASE"/>
    <property type="match status" value="1"/>
</dbReference>
<dbReference type="Pfam" id="PF01432">
    <property type="entry name" value="Peptidase_M3"/>
    <property type="match status" value="1"/>
</dbReference>
<dbReference type="SUPFAM" id="SSF55486">
    <property type="entry name" value="Metalloproteases ('zincins'), catalytic domain"/>
    <property type="match status" value="1"/>
</dbReference>
<dbReference type="PROSITE" id="PS00142">
    <property type="entry name" value="ZINC_PROTEASE"/>
    <property type="match status" value="1"/>
</dbReference>
<comment type="function">
    <text evidence="2 5 6 7">Involved in the metabolism of neuropeptides under 20 amino acid residues long (PubMed:2261476). Involved in cytoplasmic peptide degradation. Able to degrade the amyloid-beta precursor protein and generate amyloidogenic fragments (By similarity). Also acts as a regulator of cannabinoid signaling pathway by mediating degradation of hemopressin, an antagonist peptide of the cannabinoid receptor CNR1 (PubMed:12500972, PubMed:18077343).</text>
</comment>
<comment type="catalytic activity">
    <reaction evidence="5">
        <text>Preferential cleavage of bonds with hydrophobic residues at P1, P2 and P3' and a small residue at P1' in substrates of 5 to 15 residues.</text>
        <dbReference type="EC" id="3.4.24.15"/>
    </reaction>
</comment>
<comment type="cofactor">
    <cofactor evidence="2">
        <name>Zn(2+)</name>
        <dbReference type="ChEBI" id="CHEBI:29105"/>
    </cofactor>
    <text evidence="2">Binds 1 zinc ion per subunit.</text>
</comment>
<comment type="subunit">
    <text evidence="1">Monomer.</text>
</comment>
<comment type="interaction">
    <interactant intactId="EBI-6372841">
        <id>P24155</id>
    </interactant>
    <interactant intactId="EBI-397530">
        <id>P62161</id>
        <label>Calm3</label>
    </interactant>
    <organismsDiffer>false</organismsDiffer>
    <experiments>2</experiments>
</comment>
<comment type="subcellular location">
    <subcellularLocation>
        <location evidence="1">Cytoplasm</location>
    </subcellularLocation>
</comment>
<comment type="tissue specificity">
    <text evidence="7">Expressed abundantly in the testis. It is also found in the liver, lung and kidney.</text>
</comment>
<comment type="similarity">
    <text evidence="8">Belongs to the peptidase M3 family.</text>
</comment>
<reference key="1">
    <citation type="journal article" date="1990" name="Biochemistry">
        <title>Molecular cloning and primary structure of rat testes metalloendopeptidase EC 3.4.24.15.</title>
        <authorList>
            <person name="Pierotti A."/>
            <person name="Dong K.-W."/>
            <person name="Glucksman M.J."/>
            <person name="Orlowski M."/>
            <person name="Roberts J.L."/>
        </authorList>
    </citation>
    <scope>NUCLEOTIDE SEQUENCE [MRNA]</scope>
    <scope>PARTIAL PROTEIN SEQUENCE</scope>
    <scope>FUNCTION</scope>
    <source>
        <tissue>Testis</tissue>
    </source>
</reference>
<reference key="2">
    <citation type="journal article" date="1993" name="Biochem. J.">
        <title>Thimet oligopeptidase: similarity to 'soluble angiotensin II-binding protein' and some corrections to the published amino acid sequence of the rat testis enzyme.</title>
        <authorList>
            <person name="McKie N."/>
            <person name="Dando P.M."/>
            <person name="Rawlings N.D."/>
            <person name="Barrett A.J."/>
        </authorList>
    </citation>
    <scope>SEQUENCE REVISION</scope>
</reference>
<reference key="3">
    <citation type="journal article" date="2004" name="Genome Res.">
        <title>The status, quality, and expansion of the NIH full-length cDNA project: the Mammalian Gene Collection (MGC).</title>
        <authorList>
            <consortium name="The MGC Project Team"/>
        </authorList>
    </citation>
    <scope>NUCLEOTIDE SEQUENCE [LARGE SCALE MRNA]</scope>
    <source>
        <tissue>Testis</tissue>
    </source>
</reference>
<reference key="4">
    <citation type="submission" date="2007-04" db="UniProtKB">
        <authorList>
            <person name="Lubec G."/>
            <person name="Chen W.-Q."/>
        </authorList>
    </citation>
    <scope>PROTEIN SEQUENCE OF 35-45; 267-273; 311-317; 351-357; 411-418 AND 560-578</scope>
    <scope>IDENTIFICATION BY MASS SPECTROMETRY</scope>
    <source>
        <strain>Sprague-Dawley</strain>
        <tissue>Hippocampus</tissue>
    </source>
</reference>
<reference key="5">
    <citation type="journal article" date="2003" name="J. Biol. Chem.">
        <title>Novel natural peptide substrates for endopeptidase 24.15, neurolysin, and angiotensin-converting enzyme.</title>
        <authorList>
            <person name="Rioli V."/>
            <person name="Gozzo F.C."/>
            <person name="Heimann A.S."/>
            <person name="Linardi A."/>
            <person name="Krieger J.E."/>
            <person name="Shida C.S."/>
            <person name="Almeida P.C."/>
            <person name="Hyslop S."/>
            <person name="Eberlin M.N."/>
            <person name="Ferro E.S."/>
        </authorList>
    </citation>
    <scope>FUNCTION</scope>
    <scope>CATALYTIC ACTIVITY</scope>
</reference>
<reference key="6">
    <citation type="journal article" date="2007" name="Proc. Natl. Acad. Sci. U.S.A.">
        <title>Hemopressin is an inverse agonist of CB1 cannabinoid receptors.</title>
        <authorList>
            <person name="Heimann A.S."/>
            <person name="Gomes I."/>
            <person name="Dale C.S."/>
            <person name="Pagano R.L."/>
            <person name="Gupta A."/>
            <person name="de Souza L.L."/>
            <person name="Luchessi A.D."/>
            <person name="Castro L.M."/>
            <person name="Giorgi R."/>
            <person name="Rioli V."/>
            <person name="Ferro E.S."/>
            <person name="Devi L.A."/>
        </authorList>
    </citation>
    <scope>FUNCTION</scope>
</reference>
<gene>
    <name type="primary">Thop1</name>
</gene>
<feature type="chain" id="PRO_0000078155" description="Thimet oligopeptidase">
    <location>
        <begin position="1"/>
        <end position="687"/>
    </location>
</feature>
<feature type="active site" evidence="4">
    <location>
        <position position="474"/>
    </location>
</feature>
<feature type="binding site" evidence="4">
    <location>
        <position position="473"/>
    </location>
    <ligand>
        <name>Zn(2+)</name>
        <dbReference type="ChEBI" id="CHEBI:29105"/>
        <note>catalytic</note>
    </ligand>
</feature>
<feature type="binding site" evidence="4">
    <location>
        <position position="477"/>
    </location>
    <ligand>
        <name>Zn(2+)</name>
        <dbReference type="ChEBI" id="CHEBI:29105"/>
        <note>catalytic</note>
    </ligand>
</feature>
<feature type="binding site" evidence="4">
    <location>
        <position position="480"/>
    </location>
    <ligand>
        <name>Zn(2+)</name>
        <dbReference type="ChEBI" id="CHEBI:29105"/>
        <note>catalytic</note>
    </ligand>
</feature>
<feature type="modified residue" description="Phosphoserine" evidence="2">
    <location>
        <position position="16"/>
    </location>
</feature>
<feature type="modified residue" description="Phosphoserine" evidence="3">
    <location>
        <position position="172"/>
    </location>
</feature>
<feature type="modified residue" description="N6-acetyllysine" evidence="2">
    <location>
        <position position="257"/>
    </location>
</feature>
<feature type="modified residue" description="Phosphotyrosine" evidence="3">
    <location>
        <position position="278"/>
    </location>
</feature>
<feature type="modified residue" description="N6-acetyllysine" evidence="2">
    <location>
        <position position="538"/>
    </location>
</feature>
<feature type="sequence conflict" description="In Ref. 1; AAA41586." evidence="8" ref="1">
    <original>C</original>
    <variation>S</variation>
    <location>
        <position position="321"/>
    </location>
</feature>
<feature type="sequence conflict" description="In Ref. 1; AAA41586." evidence="8" ref="1">
    <original>TR</original>
    <variation>DS</variation>
    <location>
        <begin position="347"/>
        <end position="348"/>
    </location>
</feature>
<organism>
    <name type="scientific">Rattus norvegicus</name>
    <name type="common">Rat</name>
    <dbReference type="NCBI Taxonomy" id="10116"/>
    <lineage>
        <taxon>Eukaryota</taxon>
        <taxon>Metazoa</taxon>
        <taxon>Chordata</taxon>
        <taxon>Craniata</taxon>
        <taxon>Vertebrata</taxon>
        <taxon>Euteleostomi</taxon>
        <taxon>Mammalia</taxon>
        <taxon>Eutheria</taxon>
        <taxon>Euarchontoglires</taxon>
        <taxon>Glires</taxon>
        <taxon>Rodentia</taxon>
        <taxon>Myomorpha</taxon>
        <taxon>Muroidea</taxon>
        <taxon>Muridae</taxon>
        <taxon>Murinae</taxon>
        <taxon>Rattus</taxon>
    </lineage>
</organism>
<keyword id="KW-0007">Acetylation</keyword>
<keyword id="KW-0963">Cytoplasm</keyword>
<keyword id="KW-0903">Direct protein sequencing</keyword>
<keyword id="KW-0378">Hydrolase</keyword>
<keyword id="KW-0479">Metal-binding</keyword>
<keyword id="KW-0482">Metalloprotease</keyword>
<keyword id="KW-0597">Phosphoprotein</keyword>
<keyword id="KW-0645">Protease</keyword>
<keyword id="KW-1185">Reference proteome</keyword>
<keyword id="KW-0862">Zinc</keyword>
<proteinExistence type="evidence at protein level"/>
<protein>
    <recommendedName>
        <fullName>Thimet oligopeptidase</fullName>
        <ecNumber evidence="5">3.4.24.15</ecNumber>
    </recommendedName>
    <alternativeName>
        <fullName>Endo-oligopeptidase A</fullName>
    </alternativeName>
    <alternativeName>
        <fullName>Endopeptidase 24.15</fullName>
    </alternativeName>
    <alternativeName>
        <fullName>PZ-peptidase</fullName>
    </alternativeName>
    <alternativeName>
        <fullName>Soluble metallo-endopeptidase</fullName>
    </alternativeName>
</protein>